<name>VL2_HPV5B</name>
<feature type="chain" id="PRO_0000133571" description="Minor capsid protein L2">
    <location>
        <begin position="1"/>
        <end position="518"/>
    </location>
</feature>
<feature type="region of interest" description="Disordered" evidence="2">
    <location>
        <begin position="238"/>
        <end position="260"/>
    </location>
</feature>
<feature type="short sequence motif" description="Nuclear localization signal" evidence="1">
    <location>
        <begin position="1"/>
        <end position="10"/>
    </location>
</feature>
<feature type="short sequence motif" description="Nuclear localization signal" evidence="1">
    <location>
        <begin position="510"/>
        <end position="517"/>
    </location>
</feature>
<feature type="disulfide bond" evidence="1">
    <location>
        <begin position="19"/>
        <end position="25"/>
    </location>
</feature>
<protein>
    <recommendedName>
        <fullName evidence="1">Minor capsid protein L2</fullName>
    </recommendedName>
</protein>
<organismHost>
    <name type="scientific">Homo sapiens</name>
    <name type="common">Human</name>
    <dbReference type="NCBI Taxonomy" id="9606"/>
</organismHost>
<reference key="1">
    <citation type="journal article" date="1991" name="Virology">
        <title>A subtype of human papillomavirus 5 (HPV-5b) and its subgenomic segment amplified in a carcinoma: nucleotide sequences and genomic organizations.</title>
        <authorList>
            <person name="Yabe Y."/>
            <person name="Sakai A."/>
            <person name="Hitsumoto T."/>
            <person name="Kato H."/>
            <person name="Ogura H."/>
        </authorList>
    </citation>
    <scope>NUCLEOTIDE SEQUENCE [GENOMIC DNA]</scope>
</reference>
<organism>
    <name type="scientific">Human papillomavirus type 5b</name>
    <dbReference type="NCBI Taxonomy" id="10599"/>
    <lineage>
        <taxon>Viruses</taxon>
        <taxon>Monodnaviria</taxon>
        <taxon>Shotokuvirae</taxon>
        <taxon>Cossaviricota</taxon>
        <taxon>Papovaviricetes</taxon>
        <taxon>Zurhausenvirales</taxon>
        <taxon>Papillomaviridae</taxon>
        <taxon>Firstpapillomavirinae</taxon>
        <taxon>Betapapillomavirus</taxon>
        <taxon>Betapapillomavirus 1</taxon>
    </lineage>
</organism>
<gene>
    <name evidence="1" type="primary">L2</name>
</gene>
<comment type="function">
    <text evidence="1">Minor protein of the capsid that localizes along the inner surface of the virion, within the central cavities beneath the L1 pentamers. Plays a role in capsid stabilization through interaction with the major capsid protein L1. Once the virion enters the host cell, L2 escorts the genomic DNA into the nucleus by promoting escape from the endosomal compartments and traffic through the host Golgi network. Mechanistically, the C-terminus of L2 possesses a cell-penetrating peptide that protudes from the host endosome, interacts with host cytoplasmic retromer cargo and thereby mediates the capsid delivery to the host trans-Golgi network. Plays a role through its interaction with host dynein in the intracellular microtubule-dependent transport of viral capsid toward the nucleus. Mediates the viral genome import into the nucleus through binding to host importins. Once within the nucleus, L2 localizes viral genomes to host PML bodies in order to activate early gene expression for establishment of infection. Later on, promotes late gene expression by interacting with the viral E2 protein and by inhibiting its transcriptional activation functions. During virion assembly, encapsidates the genome by direct interaction with the viral DNA.</text>
</comment>
<comment type="subunit">
    <text evidence="1">Interacts with major capsid protein L1. Interacts with E2; this interaction inhibits E2 transcriptional activity but not the DNA replication function E2. Interacts with host GADD45GIP1. Interacts with host HSPA8; this interaction is required for L2 nuclear translocation. Interacts with host importins KPNB2 and KPNB3. Forms a complex with importin alpha2-beta1 heterodimers via interaction with the importin alpha2 adapter. Interacts with host DYNLT1; this interaction is essential for virus intracellular transport during entry. Interacts (via C-terminus) with host retromer subunits VPS35 and VPS29.</text>
</comment>
<comment type="subcellular location">
    <subcellularLocation>
        <location evidence="1">Virion</location>
    </subcellularLocation>
    <subcellularLocation>
        <location evidence="1">Host nucleus</location>
    </subcellularLocation>
    <subcellularLocation>
        <location evidence="1">Host early endosome</location>
    </subcellularLocation>
    <subcellularLocation>
        <location evidence="1">Host Golgi apparatus</location>
    </subcellularLocation>
</comment>
<comment type="PTM">
    <text evidence="1">Highly phosphorylated.</text>
</comment>
<comment type="similarity">
    <text evidence="1">Belongs to the papillomaviridae L2 protein family.</text>
</comment>
<proteinExistence type="inferred from homology"/>
<dbReference type="EMBL" id="D90252">
    <property type="protein sequence ID" value="BAA14298.1"/>
    <property type="molecule type" value="Genomic_DNA"/>
</dbReference>
<dbReference type="PIR" id="H40480">
    <property type="entry name" value="P2WLB5"/>
</dbReference>
<dbReference type="Proteomes" id="UP000007669">
    <property type="component" value="Genome"/>
</dbReference>
<dbReference type="GO" id="GO:0043657">
    <property type="term" value="C:host cell"/>
    <property type="evidence" value="ECO:0007669"/>
    <property type="project" value="GOC"/>
</dbReference>
<dbReference type="GO" id="GO:0044174">
    <property type="term" value="C:host cell endosome"/>
    <property type="evidence" value="ECO:0007669"/>
    <property type="project" value="UniProtKB-KW"/>
</dbReference>
<dbReference type="GO" id="GO:0044177">
    <property type="term" value="C:host cell Golgi apparatus"/>
    <property type="evidence" value="ECO:0007669"/>
    <property type="project" value="UniProtKB-SubCell"/>
</dbReference>
<dbReference type="GO" id="GO:0042025">
    <property type="term" value="C:host cell nucleus"/>
    <property type="evidence" value="ECO:0007669"/>
    <property type="project" value="UniProtKB-SubCell"/>
</dbReference>
<dbReference type="GO" id="GO:0019028">
    <property type="term" value="C:viral capsid"/>
    <property type="evidence" value="ECO:0007669"/>
    <property type="project" value="UniProtKB-UniRule"/>
</dbReference>
<dbReference type="GO" id="GO:0003677">
    <property type="term" value="F:DNA binding"/>
    <property type="evidence" value="ECO:0007669"/>
    <property type="project" value="UniProtKB-UniRule"/>
</dbReference>
<dbReference type="GO" id="GO:0005198">
    <property type="term" value="F:structural molecule activity"/>
    <property type="evidence" value="ECO:0007669"/>
    <property type="project" value="UniProtKB-UniRule"/>
</dbReference>
<dbReference type="GO" id="GO:0075521">
    <property type="term" value="P:microtubule-dependent intracellular transport of viral material towards nucleus"/>
    <property type="evidence" value="ECO:0007669"/>
    <property type="project" value="UniProtKB-UniRule"/>
</dbReference>
<dbReference type="GO" id="GO:0046718">
    <property type="term" value="P:symbiont entry into host cell"/>
    <property type="evidence" value="ECO:0007669"/>
    <property type="project" value="UniProtKB-KW"/>
</dbReference>
<dbReference type="GO" id="GO:0075732">
    <property type="term" value="P:viral penetration into host nucleus"/>
    <property type="evidence" value="ECO:0007669"/>
    <property type="project" value="UniProtKB-KW"/>
</dbReference>
<dbReference type="HAMAP" id="MF_04003">
    <property type="entry name" value="PPV_L2"/>
    <property type="match status" value="1"/>
</dbReference>
<dbReference type="InterPro" id="IPR000784">
    <property type="entry name" value="Late_L2"/>
</dbReference>
<dbReference type="Pfam" id="PF00513">
    <property type="entry name" value="Late_protein_L2"/>
    <property type="match status" value="1"/>
</dbReference>
<keyword id="KW-0167">Capsid protein</keyword>
<keyword id="KW-1176">Cytoplasmic inwards viral transport</keyword>
<keyword id="KW-1015">Disulfide bond</keyword>
<keyword id="KW-0238">DNA-binding</keyword>
<keyword id="KW-1039">Host endosome</keyword>
<keyword id="KW-1040">Host Golgi apparatus</keyword>
<keyword id="KW-1048">Host nucleus</keyword>
<keyword id="KW-0945">Host-virus interaction</keyword>
<keyword id="KW-0426">Late protein</keyword>
<keyword id="KW-1177">Microtubular inwards viral transport</keyword>
<keyword id="KW-0597">Phosphoprotein</keyword>
<keyword id="KW-1163">Viral penetration into host nucleus</keyword>
<keyword id="KW-0946">Virion</keyword>
<keyword id="KW-1160">Virus entry into host cell</keyword>
<evidence type="ECO:0000255" key="1">
    <source>
        <dbReference type="HAMAP-Rule" id="MF_04003"/>
    </source>
</evidence>
<evidence type="ECO:0000256" key="2">
    <source>
        <dbReference type="SAM" id="MobiDB-lite"/>
    </source>
</evidence>
<accession>P26540</accession>
<sequence>MARAKRVKRDSVTHIYQTCKQAGTCPPDVINKVEQTTVADNILKYGSAGVFFGGLGISTGRGTGGATGYVPLGEGPGVRVGGTPTVVRPSLVPETVGPVDILPIDTVNPVEPTASSVVPLTESTGADLLPGEVETIAEIHPVPEGPSVDTPVVTTSTGSSAVLEVAPEPIPPTRVRVSRTHYHNPSFQIITESTPAQGESSLADHVLVTSGSGGQQIGGDITDIIELEEIPSRYTFEIEEPTPPRRSSTPLPRNQSVGRRRGFSLTNRRLVQQVQVDNPLFLTQPSKLVRFAFDNPVFEEEVTNIFENDLDVFEEPPDRDFLDVRELRRPQYSTTPAGYVRVSRLGTRATIRTRSGAQIGSQVHFYRDLSSINTEDPIELQLLGQHSGDATIVQGPVESTFIDMDISENPLSESIEAYSHDLLLDEAVEDFSGSQLVIGNRRSTNSYTVPRFETTRNGSYYTQDTKGYYVAYPESRNNAEIIYPTPDIPVVIIHTHDNTGDFYLHPSLRRRKRKRKYL</sequence>